<evidence type="ECO:0000255" key="1">
    <source>
        <dbReference type="HAMAP-Rule" id="MF_01345"/>
    </source>
</evidence>
<evidence type="ECO:0000305" key="2"/>
<dbReference type="EMBL" id="CP000251">
    <property type="protein sequence ID" value="ABC81708.1"/>
    <property type="molecule type" value="Genomic_DNA"/>
</dbReference>
<dbReference type="RefSeq" id="WP_011420991.1">
    <property type="nucleotide sequence ID" value="NC_007760.1"/>
</dbReference>
<dbReference type="SMR" id="Q2IJ76"/>
<dbReference type="STRING" id="290397.Adeh_1937"/>
<dbReference type="KEGG" id="ade:Adeh_1937"/>
<dbReference type="eggNOG" id="COG0186">
    <property type="taxonomic scope" value="Bacteria"/>
</dbReference>
<dbReference type="HOGENOM" id="CLU_073626_1_0_7"/>
<dbReference type="OrthoDB" id="9811714at2"/>
<dbReference type="Proteomes" id="UP000001935">
    <property type="component" value="Chromosome"/>
</dbReference>
<dbReference type="GO" id="GO:0022627">
    <property type="term" value="C:cytosolic small ribosomal subunit"/>
    <property type="evidence" value="ECO:0007669"/>
    <property type="project" value="TreeGrafter"/>
</dbReference>
<dbReference type="GO" id="GO:0019843">
    <property type="term" value="F:rRNA binding"/>
    <property type="evidence" value="ECO:0007669"/>
    <property type="project" value="UniProtKB-UniRule"/>
</dbReference>
<dbReference type="GO" id="GO:0003735">
    <property type="term" value="F:structural constituent of ribosome"/>
    <property type="evidence" value="ECO:0007669"/>
    <property type="project" value="InterPro"/>
</dbReference>
<dbReference type="GO" id="GO:0006412">
    <property type="term" value="P:translation"/>
    <property type="evidence" value="ECO:0007669"/>
    <property type="project" value="UniProtKB-UniRule"/>
</dbReference>
<dbReference type="CDD" id="cd00364">
    <property type="entry name" value="Ribosomal_uS17"/>
    <property type="match status" value="1"/>
</dbReference>
<dbReference type="Gene3D" id="2.40.50.140">
    <property type="entry name" value="Nucleic acid-binding proteins"/>
    <property type="match status" value="1"/>
</dbReference>
<dbReference type="HAMAP" id="MF_01345_B">
    <property type="entry name" value="Ribosomal_uS17_B"/>
    <property type="match status" value="1"/>
</dbReference>
<dbReference type="InterPro" id="IPR012340">
    <property type="entry name" value="NA-bd_OB-fold"/>
</dbReference>
<dbReference type="InterPro" id="IPR000266">
    <property type="entry name" value="Ribosomal_uS17"/>
</dbReference>
<dbReference type="InterPro" id="IPR019984">
    <property type="entry name" value="Ribosomal_uS17_bact/chlr"/>
</dbReference>
<dbReference type="InterPro" id="IPR019979">
    <property type="entry name" value="Ribosomal_uS17_CS"/>
</dbReference>
<dbReference type="NCBIfam" id="NF004123">
    <property type="entry name" value="PRK05610.1"/>
    <property type="match status" value="1"/>
</dbReference>
<dbReference type="NCBIfam" id="TIGR03635">
    <property type="entry name" value="uS17_bact"/>
    <property type="match status" value="1"/>
</dbReference>
<dbReference type="PANTHER" id="PTHR10744">
    <property type="entry name" value="40S RIBOSOMAL PROTEIN S11 FAMILY MEMBER"/>
    <property type="match status" value="1"/>
</dbReference>
<dbReference type="PANTHER" id="PTHR10744:SF1">
    <property type="entry name" value="SMALL RIBOSOMAL SUBUNIT PROTEIN US17M"/>
    <property type="match status" value="1"/>
</dbReference>
<dbReference type="Pfam" id="PF00366">
    <property type="entry name" value="Ribosomal_S17"/>
    <property type="match status" value="1"/>
</dbReference>
<dbReference type="PRINTS" id="PR00973">
    <property type="entry name" value="RIBOSOMALS17"/>
</dbReference>
<dbReference type="SUPFAM" id="SSF50249">
    <property type="entry name" value="Nucleic acid-binding proteins"/>
    <property type="match status" value="1"/>
</dbReference>
<dbReference type="PROSITE" id="PS00056">
    <property type="entry name" value="RIBOSOMAL_S17"/>
    <property type="match status" value="1"/>
</dbReference>
<reference key="1">
    <citation type="submission" date="2006-01" db="EMBL/GenBank/DDBJ databases">
        <title>Complete sequence of Anaeromyxobacter dehalogenans 2CP-C.</title>
        <authorList>
            <person name="Copeland A."/>
            <person name="Lucas S."/>
            <person name="Lapidus A."/>
            <person name="Barry K."/>
            <person name="Detter J.C."/>
            <person name="Glavina T."/>
            <person name="Hammon N."/>
            <person name="Israni S."/>
            <person name="Pitluck S."/>
            <person name="Brettin T."/>
            <person name="Bruce D."/>
            <person name="Han C."/>
            <person name="Tapia R."/>
            <person name="Gilna P."/>
            <person name="Kiss H."/>
            <person name="Schmutz J."/>
            <person name="Larimer F."/>
            <person name="Land M."/>
            <person name="Kyrpides N."/>
            <person name="Anderson I."/>
            <person name="Sanford R.A."/>
            <person name="Ritalahti K.M."/>
            <person name="Thomas H.S."/>
            <person name="Kirby J.R."/>
            <person name="Zhulin I.B."/>
            <person name="Loeffler F.E."/>
            <person name="Richardson P."/>
        </authorList>
    </citation>
    <scope>NUCLEOTIDE SEQUENCE [LARGE SCALE GENOMIC DNA]</scope>
    <source>
        <strain>2CP-C</strain>
    </source>
</reference>
<organism>
    <name type="scientific">Anaeromyxobacter dehalogenans (strain 2CP-C)</name>
    <dbReference type="NCBI Taxonomy" id="290397"/>
    <lineage>
        <taxon>Bacteria</taxon>
        <taxon>Pseudomonadati</taxon>
        <taxon>Myxococcota</taxon>
        <taxon>Myxococcia</taxon>
        <taxon>Myxococcales</taxon>
        <taxon>Cystobacterineae</taxon>
        <taxon>Anaeromyxobacteraceae</taxon>
        <taxon>Anaeromyxobacter</taxon>
    </lineage>
</organism>
<keyword id="KW-1185">Reference proteome</keyword>
<keyword id="KW-0687">Ribonucleoprotein</keyword>
<keyword id="KW-0689">Ribosomal protein</keyword>
<keyword id="KW-0694">RNA-binding</keyword>
<keyword id="KW-0699">rRNA-binding</keyword>
<name>RS17_ANADE</name>
<feature type="chain" id="PRO_0000233415" description="Small ribosomal subunit protein uS17">
    <location>
        <begin position="1"/>
        <end position="85"/>
    </location>
</feature>
<proteinExistence type="inferred from homology"/>
<gene>
    <name evidence="1" type="primary">rpsQ</name>
    <name type="ordered locus">Adeh_1937</name>
</gene>
<sequence length="85" mass="9781">MERGNRKSRIGVVVSNKMTKTVVVKVERRVADPKYGKIVTKAEKYKAHDEDQACQIGDRVRIVETRPISKDKRWRVAETIEKAEA</sequence>
<protein>
    <recommendedName>
        <fullName evidence="1">Small ribosomal subunit protein uS17</fullName>
    </recommendedName>
    <alternativeName>
        <fullName evidence="2">30S ribosomal protein S17</fullName>
    </alternativeName>
</protein>
<comment type="function">
    <text evidence="1">One of the primary rRNA binding proteins, it binds specifically to the 5'-end of 16S ribosomal RNA.</text>
</comment>
<comment type="subunit">
    <text evidence="1">Part of the 30S ribosomal subunit.</text>
</comment>
<comment type="similarity">
    <text evidence="1">Belongs to the universal ribosomal protein uS17 family.</text>
</comment>
<accession>Q2IJ76</accession>